<sequence length="282" mass="30688">MGIKKFKPTTNARRGMTQLDYSEITKKSPEKSLLESQSHTAGRNNYGRMTVRHRGGGNKRQYRIIDFKRIKDDVPATVKAIEYDPNRTANIALLVYADGVKSYIIAPKGLKVGDKVQSGSEADIKVGNALPLKDIPVGTVIHNIELKPGKGGQLVRSAGASAQLLGKEGKYVLIRLASSEVRMVLATNRATIGAVGNEEHELVNVGKAGRTRYAGQRPHVRGSVMNPNDHPHGGGEGKAPIGRPSPLSPWGKKTIGKKTRNKHNKSNKFIVRGRKRGRLGNI</sequence>
<organism>
    <name type="scientific">Pediococcus pentosaceus (strain ATCC 25745 / CCUG 21536 / LMG 10740 / 183-1w)</name>
    <dbReference type="NCBI Taxonomy" id="278197"/>
    <lineage>
        <taxon>Bacteria</taxon>
        <taxon>Bacillati</taxon>
        <taxon>Bacillota</taxon>
        <taxon>Bacilli</taxon>
        <taxon>Lactobacillales</taxon>
        <taxon>Lactobacillaceae</taxon>
        <taxon>Pediococcus</taxon>
    </lineage>
</organism>
<keyword id="KW-0687">Ribonucleoprotein</keyword>
<keyword id="KW-0689">Ribosomal protein</keyword>
<keyword id="KW-0694">RNA-binding</keyword>
<keyword id="KW-0699">rRNA-binding</keyword>
<name>RL2_PEDPA</name>
<protein>
    <recommendedName>
        <fullName evidence="1">Large ribosomal subunit protein uL2</fullName>
    </recommendedName>
    <alternativeName>
        <fullName evidence="3">50S ribosomal protein L2</fullName>
    </alternativeName>
</protein>
<dbReference type="EMBL" id="CP000422">
    <property type="protein sequence ID" value="ABJ68453.1"/>
    <property type="molecule type" value="Genomic_DNA"/>
</dbReference>
<dbReference type="RefSeq" id="WP_002833331.1">
    <property type="nucleotide sequence ID" value="NC_008525.1"/>
</dbReference>
<dbReference type="SMR" id="Q03EB9"/>
<dbReference type="STRING" id="278197.PEPE_1415"/>
<dbReference type="GeneID" id="33061432"/>
<dbReference type="KEGG" id="ppe:PEPE_1415"/>
<dbReference type="eggNOG" id="COG0090">
    <property type="taxonomic scope" value="Bacteria"/>
</dbReference>
<dbReference type="HOGENOM" id="CLU_036235_2_1_9"/>
<dbReference type="OrthoDB" id="9778722at2"/>
<dbReference type="Proteomes" id="UP000000773">
    <property type="component" value="Chromosome"/>
</dbReference>
<dbReference type="GO" id="GO:0015934">
    <property type="term" value="C:large ribosomal subunit"/>
    <property type="evidence" value="ECO:0007669"/>
    <property type="project" value="InterPro"/>
</dbReference>
<dbReference type="GO" id="GO:0019843">
    <property type="term" value="F:rRNA binding"/>
    <property type="evidence" value="ECO:0007669"/>
    <property type="project" value="UniProtKB-UniRule"/>
</dbReference>
<dbReference type="GO" id="GO:0003735">
    <property type="term" value="F:structural constituent of ribosome"/>
    <property type="evidence" value="ECO:0007669"/>
    <property type="project" value="InterPro"/>
</dbReference>
<dbReference type="GO" id="GO:0016740">
    <property type="term" value="F:transferase activity"/>
    <property type="evidence" value="ECO:0007669"/>
    <property type="project" value="InterPro"/>
</dbReference>
<dbReference type="GO" id="GO:0002181">
    <property type="term" value="P:cytoplasmic translation"/>
    <property type="evidence" value="ECO:0007669"/>
    <property type="project" value="TreeGrafter"/>
</dbReference>
<dbReference type="FunFam" id="2.30.30.30:FF:000001">
    <property type="entry name" value="50S ribosomal protein L2"/>
    <property type="match status" value="1"/>
</dbReference>
<dbReference type="FunFam" id="2.40.50.140:FF:000003">
    <property type="entry name" value="50S ribosomal protein L2"/>
    <property type="match status" value="1"/>
</dbReference>
<dbReference type="FunFam" id="4.10.950.10:FF:000001">
    <property type="entry name" value="50S ribosomal protein L2"/>
    <property type="match status" value="1"/>
</dbReference>
<dbReference type="Gene3D" id="2.30.30.30">
    <property type="match status" value="1"/>
</dbReference>
<dbReference type="Gene3D" id="2.40.50.140">
    <property type="entry name" value="Nucleic acid-binding proteins"/>
    <property type="match status" value="1"/>
</dbReference>
<dbReference type="Gene3D" id="4.10.950.10">
    <property type="entry name" value="Ribosomal protein L2, domain 3"/>
    <property type="match status" value="1"/>
</dbReference>
<dbReference type="HAMAP" id="MF_01320_B">
    <property type="entry name" value="Ribosomal_uL2_B"/>
    <property type="match status" value="1"/>
</dbReference>
<dbReference type="InterPro" id="IPR012340">
    <property type="entry name" value="NA-bd_OB-fold"/>
</dbReference>
<dbReference type="InterPro" id="IPR014722">
    <property type="entry name" value="Rib_uL2_dom2"/>
</dbReference>
<dbReference type="InterPro" id="IPR002171">
    <property type="entry name" value="Ribosomal_uL2"/>
</dbReference>
<dbReference type="InterPro" id="IPR005880">
    <property type="entry name" value="Ribosomal_uL2_bac/org-type"/>
</dbReference>
<dbReference type="InterPro" id="IPR022669">
    <property type="entry name" value="Ribosomal_uL2_C"/>
</dbReference>
<dbReference type="InterPro" id="IPR022671">
    <property type="entry name" value="Ribosomal_uL2_CS"/>
</dbReference>
<dbReference type="InterPro" id="IPR014726">
    <property type="entry name" value="Ribosomal_uL2_dom3"/>
</dbReference>
<dbReference type="InterPro" id="IPR022666">
    <property type="entry name" value="Ribosomal_uL2_RNA-bd_dom"/>
</dbReference>
<dbReference type="InterPro" id="IPR008991">
    <property type="entry name" value="Translation_prot_SH3-like_sf"/>
</dbReference>
<dbReference type="NCBIfam" id="TIGR01171">
    <property type="entry name" value="rplB_bact"/>
    <property type="match status" value="1"/>
</dbReference>
<dbReference type="PANTHER" id="PTHR13691:SF5">
    <property type="entry name" value="LARGE RIBOSOMAL SUBUNIT PROTEIN UL2M"/>
    <property type="match status" value="1"/>
</dbReference>
<dbReference type="PANTHER" id="PTHR13691">
    <property type="entry name" value="RIBOSOMAL PROTEIN L2"/>
    <property type="match status" value="1"/>
</dbReference>
<dbReference type="Pfam" id="PF00181">
    <property type="entry name" value="Ribosomal_L2"/>
    <property type="match status" value="1"/>
</dbReference>
<dbReference type="Pfam" id="PF03947">
    <property type="entry name" value="Ribosomal_L2_C"/>
    <property type="match status" value="1"/>
</dbReference>
<dbReference type="PIRSF" id="PIRSF002158">
    <property type="entry name" value="Ribosomal_L2"/>
    <property type="match status" value="1"/>
</dbReference>
<dbReference type="SMART" id="SM01383">
    <property type="entry name" value="Ribosomal_L2"/>
    <property type="match status" value="1"/>
</dbReference>
<dbReference type="SMART" id="SM01382">
    <property type="entry name" value="Ribosomal_L2_C"/>
    <property type="match status" value="1"/>
</dbReference>
<dbReference type="SUPFAM" id="SSF50249">
    <property type="entry name" value="Nucleic acid-binding proteins"/>
    <property type="match status" value="1"/>
</dbReference>
<dbReference type="SUPFAM" id="SSF50104">
    <property type="entry name" value="Translation proteins SH3-like domain"/>
    <property type="match status" value="1"/>
</dbReference>
<dbReference type="PROSITE" id="PS00467">
    <property type="entry name" value="RIBOSOMAL_L2"/>
    <property type="match status" value="1"/>
</dbReference>
<gene>
    <name evidence="1" type="primary">rplB</name>
    <name type="ordered locus">PEPE_1415</name>
</gene>
<proteinExistence type="inferred from homology"/>
<accession>Q03EB9</accession>
<evidence type="ECO:0000255" key="1">
    <source>
        <dbReference type="HAMAP-Rule" id="MF_01320"/>
    </source>
</evidence>
<evidence type="ECO:0000256" key="2">
    <source>
        <dbReference type="SAM" id="MobiDB-lite"/>
    </source>
</evidence>
<evidence type="ECO:0000305" key="3"/>
<feature type="chain" id="PRO_0000309976" description="Large ribosomal subunit protein uL2">
    <location>
        <begin position="1"/>
        <end position="282"/>
    </location>
</feature>
<feature type="region of interest" description="Disordered" evidence="2">
    <location>
        <begin position="26"/>
        <end position="55"/>
    </location>
</feature>
<feature type="region of interest" description="Disordered" evidence="2">
    <location>
        <begin position="218"/>
        <end position="266"/>
    </location>
</feature>
<feature type="compositionally biased region" description="Polar residues" evidence="2">
    <location>
        <begin position="34"/>
        <end position="43"/>
    </location>
</feature>
<feature type="compositionally biased region" description="Basic residues" evidence="2">
    <location>
        <begin position="254"/>
        <end position="266"/>
    </location>
</feature>
<comment type="function">
    <text evidence="1">One of the primary rRNA binding proteins. Required for association of the 30S and 50S subunits to form the 70S ribosome, for tRNA binding and peptide bond formation. It has been suggested to have peptidyltransferase activity; this is somewhat controversial. Makes several contacts with the 16S rRNA in the 70S ribosome.</text>
</comment>
<comment type="subunit">
    <text evidence="1">Part of the 50S ribosomal subunit. Forms a bridge to the 30S subunit in the 70S ribosome.</text>
</comment>
<comment type="similarity">
    <text evidence="1">Belongs to the universal ribosomal protein uL2 family.</text>
</comment>
<reference key="1">
    <citation type="journal article" date="2006" name="Proc. Natl. Acad. Sci. U.S.A.">
        <title>Comparative genomics of the lactic acid bacteria.</title>
        <authorList>
            <person name="Makarova K.S."/>
            <person name="Slesarev A."/>
            <person name="Wolf Y.I."/>
            <person name="Sorokin A."/>
            <person name="Mirkin B."/>
            <person name="Koonin E.V."/>
            <person name="Pavlov A."/>
            <person name="Pavlova N."/>
            <person name="Karamychev V."/>
            <person name="Polouchine N."/>
            <person name="Shakhova V."/>
            <person name="Grigoriev I."/>
            <person name="Lou Y."/>
            <person name="Rohksar D."/>
            <person name="Lucas S."/>
            <person name="Huang K."/>
            <person name="Goodstein D.M."/>
            <person name="Hawkins T."/>
            <person name="Plengvidhya V."/>
            <person name="Welker D."/>
            <person name="Hughes J."/>
            <person name="Goh Y."/>
            <person name="Benson A."/>
            <person name="Baldwin K."/>
            <person name="Lee J.-H."/>
            <person name="Diaz-Muniz I."/>
            <person name="Dosti B."/>
            <person name="Smeianov V."/>
            <person name="Wechter W."/>
            <person name="Barabote R."/>
            <person name="Lorca G."/>
            <person name="Altermann E."/>
            <person name="Barrangou R."/>
            <person name="Ganesan B."/>
            <person name="Xie Y."/>
            <person name="Rawsthorne H."/>
            <person name="Tamir D."/>
            <person name="Parker C."/>
            <person name="Breidt F."/>
            <person name="Broadbent J.R."/>
            <person name="Hutkins R."/>
            <person name="O'Sullivan D."/>
            <person name="Steele J."/>
            <person name="Unlu G."/>
            <person name="Saier M.H. Jr."/>
            <person name="Klaenhammer T."/>
            <person name="Richardson P."/>
            <person name="Kozyavkin S."/>
            <person name="Weimer B.C."/>
            <person name="Mills D.A."/>
        </authorList>
    </citation>
    <scope>NUCLEOTIDE SEQUENCE [LARGE SCALE GENOMIC DNA]</scope>
    <source>
        <strain>ATCC 25745 / CCUG 21536 / LMG 10740 / 183-1w</strain>
    </source>
</reference>